<protein>
    <recommendedName>
        <fullName>DEAD-box ATP-dependent RNA helicase 47B</fullName>
        <ecNumber>3.6.4.13</ecNumber>
    </recommendedName>
</protein>
<accession>Q10PV9</accession>
<accession>B7EJN3</accession>
<keyword id="KW-0067">ATP-binding</keyword>
<keyword id="KW-0347">Helicase</keyword>
<keyword id="KW-0378">Hydrolase</keyword>
<keyword id="KW-0547">Nucleotide-binding</keyword>
<keyword id="KW-1185">Reference proteome</keyword>
<keyword id="KW-0694">RNA-binding</keyword>
<sequence>MRLTVGQVHRHVLALASSRSCFVLGDNLPLRMLSLPRAVRFHQTAWLGTETVQDKSASLTLASLEGQNKVEYGKKEKATRIGGPKPSSRASALKVKPKVSSFNSKPAKSTLPKSAVVKKTLKIDESLFSAKSFEELGLPPLLIDRLNKEGLSTPTEVQSAAIPIISQKHDAVIQSYTGSGKTLAYLLPILSEIGPLKRPTEQDGSDKRSGVEAVIVAPSRELGMQIVREVEKILGPNDKRLVQQLVGGANRSRQEEALKKNKPLIVVGTPGRISEISAGGKLHTHGCRFLVLDEVDQLLSFNYREDMHRILEHVGRKSGTSSRDILGPLARRSERQTILVSATIPFSVIRAARSWGHDPVLVRAMSVVPLDSITVPRPVLSQTDANPNSPSNSVNQAAVNSLPPSLEHYYCISKAQHKVDTLRRCIHALEAQTVIAFMNNTKPLKDVVFKLEARGMKATELHGDLGKLARSTVLKKFKDGEFRVLVTNELSARGLDVPECDLVINLDLPTDSTHYAHRAGRTGRLGRKGTVVTICEETETFVVRKMRKQLAVPIKPCEFTEGKLLVHNEEDVE</sequence>
<feature type="chain" id="PRO_0000282517" description="DEAD-box ATP-dependent RNA helicase 47B">
    <location>
        <begin position="1"/>
        <end position="573"/>
    </location>
</feature>
<feature type="domain" description="Helicase ATP-binding" evidence="1">
    <location>
        <begin position="162"/>
        <end position="362"/>
    </location>
</feature>
<feature type="domain" description="Helicase C-terminal" evidence="2">
    <location>
        <begin position="421"/>
        <end position="565"/>
    </location>
</feature>
<feature type="short sequence motif" description="Q motif">
    <location>
        <begin position="131"/>
        <end position="159"/>
    </location>
</feature>
<feature type="short sequence motif" description="DEAD box">
    <location>
        <begin position="293"/>
        <end position="296"/>
    </location>
</feature>
<feature type="binding site" evidence="1">
    <location>
        <begin position="175"/>
        <end position="182"/>
    </location>
    <ligand>
        <name>ATP</name>
        <dbReference type="ChEBI" id="CHEBI:30616"/>
    </ligand>
</feature>
<comment type="catalytic activity">
    <reaction>
        <text>ATP + H2O = ADP + phosphate + H(+)</text>
        <dbReference type="Rhea" id="RHEA:13065"/>
        <dbReference type="ChEBI" id="CHEBI:15377"/>
        <dbReference type="ChEBI" id="CHEBI:15378"/>
        <dbReference type="ChEBI" id="CHEBI:30616"/>
        <dbReference type="ChEBI" id="CHEBI:43474"/>
        <dbReference type="ChEBI" id="CHEBI:456216"/>
        <dbReference type="EC" id="3.6.4.13"/>
    </reaction>
</comment>
<comment type="domain">
    <text>The Q motif is unique to and characteristic of the DEAD box family of RNA helicases and controls ATP binding and hydrolysis.</text>
</comment>
<comment type="similarity">
    <text evidence="3">Belongs to the DEAD box helicase family.</text>
</comment>
<organism>
    <name type="scientific">Oryza sativa subsp. japonica</name>
    <name type="common">Rice</name>
    <dbReference type="NCBI Taxonomy" id="39947"/>
    <lineage>
        <taxon>Eukaryota</taxon>
        <taxon>Viridiplantae</taxon>
        <taxon>Streptophyta</taxon>
        <taxon>Embryophyta</taxon>
        <taxon>Tracheophyta</taxon>
        <taxon>Spermatophyta</taxon>
        <taxon>Magnoliopsida</taxon>
        <taxon>Liliopsida</taxon>
        <taxon>Poales</taxon>
        <taxon>Poaceae</taxon>
        <taxon>BOP clade</taxon>
        <taxon>Oryzoideae</taxon>
        <taxon>Oryzeae</taxon>
        <taxon>Oryzinae</taxon>
        <taxon>Oryza</taxon>
        <taxon>Oryza sativa</taxon>
    </lineage>
</organism>
<reference key="1">
    <citation type="journal article" date="2005" name="Genome Res.">
        <title>Sequence, annotation, and analysis of synteny between rice chromosome 3 and diverged grass species.</title>
        <authorList>
            <consortium name="The rice chromosome 3 sequencing consortium"/>
            <person name="Buell C.R."/>
            <person name="Yuan Q."/>
            <person name="Ouyang S."/>
            <person name="Liu J."/>
            <person name="Zhu W."/>
            <person name="Wang A."/>
            <person name="Maiti R."/>
            <person name="Haas B."/>
            <person name="Wortman J."/>
            <person name="Pertea M."/>
            <person name="Jones K.M."/>
            <person name="Kim M."/>
            <person name="Overton L."/>
            <person name="Tsitrin T."/>
            <person name="Fadrosh D."/>
            <person name="Bera J."/>
            <person name="Weaver B."/>
            <person name="Jin S."/>
            <person name="Johri S."/>
            <person name="Reardon M."/>
            <person name="Webb K."/>
            <person name="Hill J."/>
            <person name="Moffat K."/>
            <person name="Tallon L."/>
            <person name="Van Aken S."/>
            <person name="Lewis M."/>
            <person name="Utterback T."/>
            <person name="Feldblyum T."/>
            <person name="Zismann V."/>
            <person name="Iobst S."/>
            <person name="Hsiao J."/>
            <person name="de Vazeille A.R."/>
            <person name="Salzberg S.L."/>
            <person name="White O."/>
            <person name="Fraser C.M."/>
            <person name="Yu Y."/>
            <person name="Kim H."/>
            <person name="Rambo T."/>
            <person name="Currie J."/>
            <person name="Collura K."/>
            <person name="Kernodle-Thompson S."/>
            <person name="Wei F."/>
            <person name="Kudrna K."/>
            <person name="Ammiraju J.S.S."/>
            <person name="Luo M."/>
            <person name="Goicoechea J.L."/>
            <person name="Wing R.A."/>
            <person name="Henry D."/>
            <person name="Oates R."/>
            <person name="Palmer M."/>
            <person name="Pries G."/>
            <person name="Saski C."/>
            <person name="Simmons J."/>
            <person name="Soderlund C."/>
            <person name="Nelson W."/>
            <person name="de la Bastide M."/>
            <person name="Spiegel L."/>
            <person name="Nascimento L."/>
            <person name="Huang E."/>
            <person name="Preston R."/>
            <person name="Zutavern T."/>
            <person name="Palmer L."/>
            <person name="O'Shaughnessy A."/>
            <person name="Dike S."/>
            <person name="McCombie W.R."/>
            <person name="Minx P."/>
            <person name="Cordum H."/>
            <person name="Wilson R."/>
            <person name="Jin W."/>
            <person name="Lee H.R."/>
            <person name="Jiang J."/>
            <person name="Jackson S."/>
        </authorList>
    </citation>
    <scope>NUCLEOTIDE SEQUENCE [LARGE SCALE GENOMIC DNA]</scope>
    <source>
        <strain>cv. Nipponbare</strain>
    </source>
</reference>
<reference key="2">
    <citation type="journal article" date="2005" name="Nature">
        <title>The map-based sequence of the rice genome.</title>
        <authorList>
            <consortium name="International rice genome sequencing project (IRGSP)"/>
        </authorList>
    </citation>
    <scope>NUCLEOTIDE SEQUENCE [LARGE SCALE GENOMIC DNA]</scope>
    <source>
        <strain>cv. Nipponbare</strain>
    </source>
</reference>
<reference key="3">
    <citation type="journal article" date="2008" name="Nucleic Acids Res.">
        <title>The rice annotation project database (RAP-DB): 2008 update.</title>
        <authorList>
            <consortium name="The rice annotation project (RAP)"/>
        </authorList>
    </citation>
    <scope>GENOME REANNOTATION</scope>
    <source>
        <strain>cv. Nipponbare</strain>
    </source>
</reference>
<reference key="4">
    <citation type="journal article" date="2013" name="Rice">
        <title>Improvement of the Oryza sativa Nipponbare reference genome using next generation sequence and optical map data.</title>
        <authorList>
            <person name="Kawahara Y."/>
            <person name="de la Bastide M."/>
            <person name="Hamilton J.P."/>
            <person name="Kanamori H."/>
            <person name="McCombie W.R."/>
            <person name="Ouyang S."/>
            <person name="Schwartz D.C."/>
            <person name="Tanaka T."/>
            <person name="Wu J."/>
            <person name="Zhou S."/>
            <person name="Childs K.L."/>
            <person name="Davidson R.M."/>
            <person name="Lin H."/>
            <person name="Quesada-Ocampo L."/>
            <person name="Vaillancourt B."/>
            <person name="Sakai H."/>
            <person name="Lee S.S."/>
            <person name="Kim J."/>
            <person name="Numa H."/>
            <person name="Itoh T."/>
            <person name="Buell C.R."/>
            <person name="Matsumoto T."/>
        </authorList>
    </citation>
    <scope>GENOME REANNOTATION</scope>
    <source>
        <strain>cv. Nipponbare</strain>
    </source>
</reference>
<reference key="5">
    <citation type="journal article" date="2005" name="PLoS Biol.">
        <title>The genomes of Oryza sativa: a history of duplications.</title>
        <authorList>
            <person name="Yu J."/>
            <person name="Wang J."/>
            <person name="Lin W."/>
            <person name="Li S."/>
            <person name="Li H."/>
            <person name="Zhou J."/>
            <person name="Ni P."/>
            <person name="Dong W."/>
            <person name="Hu S."/>
            <person name="Zeng C."/>
            <person name="Zhang J."/>
            <person name="Zhang Y."/>
            <person name="Li R."/>
            <person name="Xu Z."/>
            <person name="Li S."/>
            <person name="Li X."/>
            <person name="Zheng H."/>
            <person name="Cong L."/>
            <person name="Lin L."/>
            <person name="Yin J."/>
            <person name="Geng J."/>
            <person name="Li G."/>
            <person name="Shi J."/>
            <person name="Liu J."/>
            <person name="Lv H."/>
            <person name="Li J."/>
            <person name="Wang J."/>
            <person name="Deng Y."/>
            <person name="Ran L."/>
            <person name="Shi X."/>
            <person name="Wang X."/>
            <person name="Wu Q."/>
            <person name="Li C."/>
            <person name="Ren X."/>
            <person name="Wang J."/>
            <person name="Wang X."/>
            <person name="Li D."/>
            <person name="Liu D."/>
            <person name="Zhang X."/>
            <person name="Ji Z."/>
            <person name="Zhao W."/>
            <person name="Sun Y."/>
            <person name="Zhang Z."/>
            <person name="Bao J."/>
            <person name="Han Y."/>
            <person name="Dong L."/>
            <person name="Ji J."/>
            <person name="Chen P."/>
            <person name="Wu S."/>
            <person name="Liu J."/>
            <person name="Xiao Y."/>
            <person name="Bu D."/>
            <person name="Tan J."/>
            <person name="Yang L."/>
            <person name="Ye C."/>
            <person name="Zhang J."/>
            <person name="Xu J."/>
            <person name="Zhou Y."/>
            <person name="Yu Y."/>
            <person name="Zhang B."/>
            <person name="Zhuang S."/>
            <person name="Wei H."/>
            <person name="Liu B."/>
            <person name="Lei M."/>
            <person name="Yu H."/>
            <person name="Li Y."/>
            <person name="Xu H."/>
            <person name="Wei S."/>
            <person name="He X."/>
            <person name="Fang L."/>
            <person name="Zhang Z."/>
            <person name="Zhang Y."/>
            <person name="Huang X."/>
            <person name="Su Z."/>
            <person name="Tong W."/>
            <person name="Li J."/>
            <person name="Tong Z."/>
            <person name="Li S."/>
            <person name="Ye J."/>
            <person name="Wang L."/>
            <person name="Fang L."/>
            <person name="Lei T."/>
            <person name="Chen C.-S."/>
            <person name="Chen H.-C."/>
            <person name="Xu Z."/>
            <person name="Li H."/>
            <person name="Huang H."/>
            <person name="Zhang F."/>
            <person name="Xu H."/>
            <person name="Li N."/>
            <person name="Zhao C."/>
            <person name="Li S."/>
            <person name="Dong L."/>
            <person name="Huang Y."/>
            <person name="Li L."/>
            <person name="Xi Y."/>
            <person name="Qi Q."/>
            <person name="Li W."/>
            <person name="Zhang B."/>
            <person name="Hu W."/>
            <person name="Zhang Y."/>
            <person name="Tian X."/>
            <person name="Jiao Y."/>
            <person name="Liang X."/>
            <person name="Jin J."/>
            <person name="Gao L."/>
            <person name="Zheng W."/>
            <person name="Hao B."/>
            <person name="Liu S.-M."/>
            <person name="Wang W."/>
            <person name="Yuan L."/>
            <person name="Cao M."/>
            <person name="McDermott J."/>
            <person name="Samudrala R."/>
            <person name="Wang J."/>
            <person name="Wong G.K.-S."/>
            <person name="Yang H."/>
        </authorList>
    </citation>
    <scope>NUCLEOTIDE SEQUENCE [LARGE SCALE GENOMIC DNA]</scope>
    <source>
        <strain>cv. Nipponbare</strain>
    </source>
</reference>
<reference key="6">
    <citation type="journal article" date="2003" name="Science">
        <title>Collection, mapping, and annotation of over 28,000 cDNA clones from japonica rice.</title>
        <authorList>
            <consortium name="The rice full-length cDNA consortium"/>
        </authorList>
    </citation>
    <scope>NUCLEOTIDE SEQUENCE [LARGE SCALE MRNA]</scope>
    <source>
        <strain>cv. Nipponbare</strain>
    </source>
</reference>
<proteinExistence type="evidence at transcript level"/>
<name>RH47B_ORYSJ</name>
<gene>
    <name type="ordered locus">Os03g0219700</name>
    <name type="ordered locus">LOC_Os03g12000</name>
    <name type="ORF">OsJ_09947</name>
</gene>
<dbReference type="EC" id="3.6.4.13"/>
<dbReference type="EMBL" id="DP000009">
    <property type="protein sequence ID" value="ABF94680.1"/>
    <property type="molecule type" value="Genomic_DNA"/>
</dbReference>
<dbReference type="EMBL" id="AP008209">
    <property type="protein sequence ID" value="BAF11317.1"/>
    <property type="molecule type" value="Genomic_DNA"/>
</dbReference>
<dbReference type="EMBL" id="AP014959">
    <property type="protein sequence ID" value="BAS83004.1"/>
    <property type="molecule type" value="Genomic_DNA"/>
</dbReference>
<dbReference type="EMBL" id="CM000140">
    <property type="protein sequence ID" value="EAZ26090.1"/>
    <property type="molecule type" value="Genomic_DNA"/>
</dbReference>
<dbReference type="EMBL" id="AK071610">
    <property type="protein sequence ID" value="BAG92580.1"/>
    <property type="molecule type" value="mRNA"/>
</dbReference>
<dbReference type="RefSeq" id="XP_015627909.1">
    <property type="nucleotide sequence ID" value="XM_015772423.1"/>
</dbReference>
<dbReference type="SMR" id="Q10PV9"/>
<dbReference type="FunCoup" id="Q10PV9">
    <property type="interactions" value="1447"/>
</dbReference>
<dbReference type="STRING" id="39947.Q10PV9"/>
<dbReference type="PaxDb" id="39947-Q10PV9"/>
<dbReference type="EnsemblPlants" id="Os03t0219700-01">
    <property type="protein sequence ID" value="Os03t0219700-01"/>
    <property type="gene ID" value="Os03g0219700"/>
</dbReference>
<dbReference type="Gramene" id="Os03t0219700-01">
    <property type="protein sequence ID" value="Os03t0219700-01"/>
    <property type="gene ID" value="Os03g0219700"/>
</dbReference>
<dbReference type="KEGG" id="dosa:Os03g0219700"/>
<dbReference type="eggNOG" id="KOG0327">
    <property type="taxonomic scope" value="Eukaryota"/>
</dbReference>
<dbReference type="HOGENOM" id="CLU_003041_1_3_1"/>
<dbReference type="InParanoid" id="Q10PV9"/>
<dbReference type="OMA" id="KHYYCIS"/>
<dbReference type="OrthoDB" id="10256233at2759"/>
<dbReference type="Proteomes" id="UP000000763">
    <property type="component" value="Chromosome 3"/>
</dbReference>
<dbReference type="Proteomes" id="UP000007752">
    <property type="component" value="Chromosome 3"/>
</dbReference>
<dbReference type="Proteomes" id="UP000059680">
    <property type="component" value="Chromosome 3"/>
</dbReference>
<dbReference type="GO" id="GO:0005524">
    <property type="term" value="F:ATP binding"/>
    <property type="evidence" value="ECO:0007669"/>
    <property type="project" value="UniProtKB-KW"/>
</dbReference>
<dbReference type="GO" id="GO:0016887">
    <property type="term" value="F:ATP hydrolysis activity"/>
    <property type="evidence" value="ECO:0007669"/>
    <property type="project" value="RHEA"/>
</dbReference>
<dbReference type="GO" id="GO:0003723">
    <property type="term" value="F:RNA binding"/>
    <property type="evidence" value="ECO:0000318"/>
    <property type="project" value="GO_Central"/>
</dbReference>
<dbReference type="GO" id="GO:0003724">
    <property type="term" value="F:RNA helicase activity"/>
    <property type="evidence" value="ECO:0000318"/>
    <property type="project" value="GO_Central"/>
</dbReference>
<dbReference type="CDD" id="cd00268">
    <property type="entry name" value="DEADc"/>
    <property type="match status" value="1"/>
</dbReference>
<dbReference type="CDD" id="cd18787">
    <property type="entry name" value="SF2_C_DEAD"/>
    <property type="match status" value="1"/>
</dbReference>
<dbReference type="Gene3D" id="3.40.50.300">
    <property type="entry name" value="P-loop containing nucleotide triphosphate hydrolases"/>
    <property type="match status" value="2"/>
</dbReference>
<dbReference type="InterPro" id="IPR011545">
    <property type="entry name" value="DEAD/DEAH_box_helicase_dom"/>
</dbReference>
<dbReference type="InterPro" id="IPR050547">
    <property type="entry name" value="DEAD_box_RNA_helicases"/>
</dbReference>
<dbReference type="InterPro" id="IPR014001">
    <property type="entry name" value="Helicase_ATP-bd"/>
</dbReference>
<dbReference type="InterPro" id="IPR001650">
    <property type="entry name" value="Helicase_C-like"/>
</dbReference>
<dbReference type="InterPro" id="IPR027417">
    <property type="entry name" value="P-loop_NTPase"/>
</dbReference>
<dbReference type="InterPro" id="IPR014014">
    <property type="entry name" value="RNA_helicase_DEAD_Q_motif"/>
</dbReference>
<dbReference type="PANTHER" id="PTHR47963">
    <property type="entry name" value="DEAD-BOX ATP-DEPENDENT RNA HELICASE 47, MITOCHONDRIAL"/>
    <property type="match status" value="1"/>
</dbReference>
<dbReference type="PANTHER" id="PTHR47963:SF3">
    <property type="entry name" value="DEAD-BOX ATP-DEPENDENT RNA HELICASE 47, MITOCHONDRIAL"/>
    <property type="match status" value="1"/>
</dbReference>
<dbReference type="Pfam" id="PF00270">
    <property type="entry name" value="DEAD"/>
    <property type="match status" value="1"/>
</dbReference>
<dbReference type="Pfam" id="PF00271">
    <property type="entry name" value="Helicase_C"/>
    <property type="match status" value="1"/>
</dbReference>
<dbReference type="SMART" id="SM00487">
    <property type="entry name" value="DEXDc"/>
    <property type="match status" value="1"/>
</dbReference>
<dbReference type="SMART" id="SM00490">
    <property type="entry name" value="HELICc"/>
    <property type="match status" value="1"/>
</dbReference>
<dbReference type="SUPFAM" id="SSF52540">
    <property type="entry name" value="P-loop containing nucleoside triphosphate hydrolases"/>
    <property type="match status" value="1"/>
</dbReference>
<dbReference type="PROSITE" id="PS51192">
    <property type="entry name" value="HELICASE_ATP_BIND_1"/>
    <property type="match status" value="1"/>
</dbReference>
<dbReference type="PROSITE" id="PS51194">
    <property type="entry name" value="HELICASE_CTER"/>
    <property type="match status" value="1"/>
</dbReference>
<dbReference type="PROSITE" id="PS51195">
    <property type="entry name" value="Q_MOTIF"/>
    <property type="match status" value="1"/>
</dbReference>
<evidence type="ECO:0000255" key="1">
    <source>
        <dbReference type="PROSITE-ProRule" id="PRU00541"/>
    </source>
</evidence>
<evidence type="ECO:0000255" key="2">
    <source>
        <dbReference type="PROSITE-ProRule" id="PRU00542"/>
    </source>
</evidence>
<evidence type="ECO:0000305" key="3"/>